<dbReference type="EC" id="3.4.24.-" evidence="1"/>
<dbReference type="EMBL" id="CP001393">
    <property type="protein sequence ID" value="ACM59766.1"/>
    <property type="molecule type" value="Genomic_DNA"/>
</dbReference>
<dbReference type="RefSeq" id="WP_015907215.1">
    <property type="nucleotide sequence ID" value="NC_012034.1"/>
</dbReference>
<dbReference type="SMR" id="B9MPK5"/>
<dbReference type="STRING" id="521460.Athe_0642"/>
<dbReference type="MEROPS" id="M41.021"/>
<dbReference type="GeneID" id="31771996"/>
<dbReference type="KEGG" id="ate:Athe_0642"/>
<dbReference type="eggNOG" id="COG0465">
    <property type="taxonomic scope" value="Bacteria"/>
</dbReference>
<dbReference type="HOGENOM" id="CLU_000688_16_2_9"/>
<dbReference type="Proteomes" id="UP000007723">
    <property type="component" value="Chromosome"/>
</dbReference>
<dbReference type="GO" id="GO:0005886">
    <property type="term" value="C:plasma membrane"/>
    <property type="evidence" value="ECO:0007669"/>
    <property type="project" value="UniProtKB-SubCell"/>
</dbReference>
<dbReference type="GO" id="GO:0005524">
    <property type="term" value="F:ATP binding"/>
    <property type="evidence" value="ECO:0007669"/>
    <property type="project" value="UniProtKB-UniRule"/>
</dbReference>
<dbReference type="GO" id="GO:0016887">
    <property type="term" value="F:ATP hydrolysis activity"/>
    <property type="evidence" value="ECO:0007669"/>
    <property type="project" value="UniProtKB-UniRule"/>
</dbReference>
<dbReference type="GO" id="GO:0004176">
    <property type="term" value="F:ATP-dependent peptidase activity"/>
    <property type="evidence" value="ECO:0007669"/>
    <property type="project" value="InterPro"/>
</dbReference>
<dbReference type="GO" id="GO:0004222">
    <property type="term" value="F:metalloendopeptidase activity"/>
    <property type="evidence" value="ECO:0007669"/>
    <property type="project" value="InterPro"/>
</dbReference>
<dbReference type="GO" id="GO:0008270">
    <property type="term" value="F:zinc ion binding"/>
    <property type="evidence" value="ECO:0007669"/>
    <property type="project" value="UniProtKB-UniRule"/>
</dbReference>
<dbReference type="GO" id="GO:0030163">
    <property type="term" value="P:protein catabolic process"/>
    <property type="evidence" value="ECO:0007669"/>
    <property type="project" value="UniProtKB-UniRule"/>
</dbReference>
<dbReference type="GO" id="GO:0006508">
    <property type="term" value="P:proteolysis"/>
    <property type="evidence" value="ECO:0007669"/>
    <property type="project" value="UniProtKB-KW"/>
</dbReference>
<dbReference type="CDD" id="cd19501">
    <property type="entry name" value="RecA-like_FtsH"/>
    <property type="match status" value="1"/>
</dbReference>
<dbReference type="FunFam" id="1.10.8.60:FF:000001">
    <property type="entry name" value="ATP-dependent zinc metalloprotease FtsH"/>
    <property type="match status" value="1"/>
</dbReference>
<dbReference type="FunFam" id="1.20.58.760:FF:000001">
    <property type="entry name" value="ATP-dependent zinc metalloprotease FtsH"/>
    <property type="match status" value="1"/>
</dbReference>
<dbReference type="FunFam" id="3.40.50.300:FF:000001">
    <property type="entry name" value="ATP-dependent zinc metalloprotease FtsH"/>
    <property type="match status" value="1"/>
</dbReference>
<dbReference type="Gene3D" id="1.10.8.60">
    <property type="match status" value="1"/>
</dbReference>
<dbReference type="Gene3D" id="3.30.720.210">
    <property type="match status" value="1"/>
</dbReference>
<dbReference type="Gene3D" id="3.40.50.300">
    <property type="entry name" value="P-loop containing nucleotide triphosphate hydrolases"/>
    <property type="match status" value="1"/>
</dbReference>
<dbReference type="Gene3D" id="1.20.58.760">
    <property type="entry name" value="Peptidase M41"/>
    <property type="match status" value="1"/>
</dbReference>
<dbReference type="HAMAP" id="MF_01458">
    <property type="entry name" value="FtsH"/>
    <property type="match status" value="1"/>
</dbReference>
<dbReference type="InterPro" id="IPR003593">
    <property type="entry name" value="AAA+_ATPase"/>
</dbReference>
<dbReference type="InterPro" id="IPR041569">
    <property type="entry name" value="AAA_lid_3"/>
</dbReference>
<dbReference type="InterPro" id="IPR003959">
    <property type="entry name" value="ATPase_AAA_core"/>
</dbReference>
<dbReference type="InterPro" id="IPR003960">
    <property type="entry name" value="ATPase_AAA_CS"/>
</dbReference>
<dbReference type="InterPro" id="IPR005936">
    <property type="entry name" value="FtsH"/>
</dbReference>
<dbReference type="InterPro" id="IPR027417">
    <property type="entry name" value="P-loop_NTPase"/>
</dbReference>
<dbReference type="InterPro" id="IPR011546">
    <property type="entry name" value="Pept_M41_FtsH_extracell"/>
</dbReference>
<dbReference type="InterPro" id="IPR000642">
    <property type="entry name" value="Peptidase_M41"/>
</dbReference>
<dbReference type="InterPro" id="IPR037219">
    <property type="entry name" value="Peptidase_M41-like"/>
</dbReference>
<dbReference type="NCBIfam" id="TIGR01241">
    <property type="entry name" value="FtsH_fam"/>
    <property type="match status" value="1"/>
</dbReference>
<dbReference type="PANTHER" id="PTHR23076:SF113">
    <property type="entry name" value="ATP-DEPENDENT ZINC METALLOPROTEASE FTSH 1, CHLOROPLASTIC-RELATED"/>
    <property type="match status" value="1"/>
</dbReference>
<dbReference type="PANTHER" id="PTHR23076">
    <property type="entry name" value="METALLOPROTEASE M41 FTSH"/>
    <property type="match status" value="1"/>
</dbReference>
<dbReference type="Pfam" id="PF00004">
    <property type="entry name" value="AAA"/>
    <property type="match status" value="1"/>
</dbReference>
<dbReference type="Pfam" id="PF17862">
    <property type="entry name" value="AAA_lid_3"/>
    <property type="match status" value="1"/>
</dbReference>
<dbReference type="Pfam" id="PF06480">
    <property type="entry name" value="FtsH_ext"/>
    <property type="match status" value="1"/>
</dbReference>
<dbReference type="Pfam" id="PF01434">
    <property type="entry name" value="Peptidase_M41"/>
    <property type="match status" value="1"/>
</dbReference>
<dbReference type="SMART" id="SM00382">
    <property type="entry name" value="AAA"/>
    <property type="match status" value="1"/>
</dbReference>
<dbReference type="SUPFAM" id="SSF140990">
    <property type="entry name" value="FtsH protease domain-like"/>
    <property type="match status" value="1"/>
</dbReference>
<dbReference type="SUPFAM" id="SSF52540">
    <property type="entry name" value="P-loop containing nucleoside triphosphate hydrolases"/>
    <property type="match status" value="1"/>
</dbReference>
<dbReference type="PROSITE" id="PS00674">
    <property type="entry name" value="AAA"/>
    <property type="match status" value="1"/>
</dbReference>
<organism>
    <name type="scientific">Caldicellulosiruptor bescii (strain ATCC BAA-1888 / DSM 6725 / KCTC 15123 / Z-1320)</name>
    <name type="common">Anaerocellum thermophilum</name>
    <dbReference type="NCBI Taxonomy" id="521460"/>
    <lineage>
        <taxon>Bacteria</taxon>
        <taxon>Bacillati</taxon>
        <taxon>Bacillota</taxon>
        <taxon>Bacillota incertae sedis</taxon>
        <taxon>Caldicellulosiruptorales</taxon>
        <taxon>Caldicellulosiruptoraceae</taxon>
        <taxon>Caldicellulosiruptor</taxon>
    </lineage>
</organism>
<gene>
    <name evidence="1" type="primary">ftsH</name>
    <name type="ordered locus">Athe_0642</name>
</gene>
<evidence type="ECO:0000255" key="1">
    <source>
        <dbReference type="HAMAP-Rule" id="MF_01458"/>
    </source>
</evidence>
<accession>B9MPK5</accession>
<keyword id="KW-0067">ATP-binding</keyword>
<keyword id="KW-1003">Cell membrane</keyword>
<keyword id="KW-0378">Hydrolase</keyword>
<keyword id="KW-0472">Membrane</keyword>
<keyword id="KW-0479">Metal-binding</keyword>
<keyword id="KW-0482">Metalloprotease</keyword>
<keyword id="KW-0547">Nucleotide-binding</keyword>
<keyword id="KW-0645">Protease</keyword>
<keyword id="KW-0812">Transmembrane</keyword>
<keyword id="KW-1133">Transmembrane helix</keyword>
<keyword id="KW-0862">Zinc</keyword>
<reference key="1">
    <citation type="submission" date="2009-01" db="EMBL/GenBank/DDBJ databases">
        <title>Complete sequence of chromosome of Caldicellulosiruptor becscii DSM 6725.</title>
        <authorList>
            <person name="Lucas S."/>
            <person name="Copeland A."/>
            <person name="Lapidus A."/>
            <person name="Glavina del Rio T."/>
            <person name="Tice H."/>
            <person name="Bruce D."/>
            <person name="Goodwin L."/>
            <person name="Pitluck S."/>
            <person name="Sims D."/>
            <person name="Meincke L."/>
            <person name="Brettin T."/>
            <person name="Detter J.C."/>
            <person name="Han C."/>
            <person name="Larimer F."/>
            <person name="Land M."/>
            <person name="Hauser L."/>
            <person name="Kyrpides N."/>
            <person name="Ovchinnikova G."/>
            <person name="Kataeva I."/>
            <person name="Adams M.W.W."/>
        </authorList>
    </citation>
    <scope>NUCLEOTIDE SEQUENCE [LARGE SCALE GENOMIC DNA]</scope>
    <source>
        <strain>ATCC BAA-1888 / DSM 6725 / KCTC 15123 / Z-1320</strain>
    </source>
</reference>
<protein>
    <recommendedName>
        <fullName evidence="1">ATP-dependent zinc metalloprotease FtsH</fullName>
        <ecNumber evidence="1">3.4.24.-</ecNumber>
    </recommendedName>
</protein>
<proteinExistence type="inferred from homology"/>
<comment type="function">
    <text evidence="1">Acts as a processive, ATP-dependent zinc metallopeptidase for both cytoplasmic and membrane proteins. Plays a role in the quality control of integral membrane proteins.</text>
</comment>
<comment type="cofactor">
    <cofactor evidence="1">
        <name>Zn(2+)</name>
        <dbReference type="ChEBI" id="CHEBI:29105"/>
    </cofactor>
    <text evidence="1">Binds 1 zinc ion per subunit.</text>
</comment>
<comment type="subunit">
    <text evidence="1">Homohexamer.</text>
</comment>
<comment type="subcellular location">
    <subcellularLocation>
        <location evidence="1">Cell membrane</location>
        <topology evidence="1">Multi-pass membrane protein</topology>
        <orientation evidence="1">Cytoplasmic side</orientation>
    </subcellularLocation>
</comment>
<comment type="similarity">
    <text evidence="1">In the central section; belongs to the AAA ATPase family.</text>
</comment>
<comment type="similarity">
    <text evidence="1">In the C-terminal section; belongs to the peptidase M41 family.</text>
</comment>
<name>FTSH_CALBD</name>
<feature type="chain" id="PRO_0000400324" description="ATP-dependent zinc metalloprotease FtsH">
    <location>
        <begin position="1"/>
        <end position="616"/>
    </location>
</feature>
<feature type="topological domain" description="Cytoplasmic" evidence="1">
    <location>
        <begin position="1"/>
        <end position="8"/>
    </location>
</feature>
<feature type="transmembrane region" description="Helical" evidence="1">
    <location>
        <begin position="9"/>
        <end position="29"/>
    </location>
</feature>
<feature type="topological domain" description="Extracellular" evidence="1">
    <location>
        <begin position="30"/>
        <end position="114"/>
    </location>
</feature>
<feature type="transmembrane region" description="Helical" evidence="1">
    <location>
        <begin position="115"/>
        <end position="135"/>
    </location>
</feature>
<feature type="topological domain" description="Cytoplasmic" evidence="1">
    <location>
        <begin position="136"/>
        <end position="616"/>
    </location>
</feature>
<feature type="active site" evidence="1">
    <location>
        <position position="431"/>
    </location>
</feature>
<feature type="binding site" evidence="1">
    <location>
        <begin position="208"/>
        <end position="215"/>
    </location>
    <ligand>
        <name>ATP</name>
        <dbReference type="ChEBI" id="CHEBI:30616"/>
    </ligand>
</feature>
<feature type="binding site" evidence="1">
    <location>
        <position position="430"/>
    </location>
    <ligand>
        <name>Zn(2+)</name>
        <dbReference type="ChEBI" id="CHEBI:29105"/>
        <note>catalytic</note>
    </ligand>
</feature>
<feature type="binding site" evidence="1">
    <location>
        <position position="434"/>
    </location>
    <ligand>
        <name>Zn(2+)</name>
        <dbReference type="ChEBI" id="CHEBI:29105"/>
        <note>catalytic</note>
    </ligand>
</feature>
<feature type="binding site" evidence="1">
    <location>
        <position position="506"/>
    </location>
    <ligand>
        <name>Zn(2+)</name>
        <dbReference type="ChEBI" id="CHEBI:29105"/>
        <note>catalytic</note>
    </ligand>
</feature>
<sequence length="616" mass="68457">MRNLFKTATIYILIALVILLLVDIFSGGLSYNQFFSNLSERREVIYSELINDINDGKVTRIVLSYNNVSGQYADGTKFDNVFVPSPDKFLDQIQPAIQAKKIQIVTKEPPQVPWWLSTFLPMLIFAGLMIFVWIFMLQQTQGGGSKIMSFTKSRAKTIQDLKKKVTFADVAGADEEKEELKEVIDFLKNPRKYIELGARIPKGILLVGPPGTGKTLLAKAVAGEAGVPFFSISGSDFVEMFVGVGAARVRDLFDQAKRNAPCVVFIDEIDAVGRHRGAGLGGGHDEREQTLNQLLVEMDGFGTNEGIIVMAATNRPDILDPALLRPGRFDRQIVVNVPDAKAREEILKVHARNKPLGEDVDLSQIAKITAGFTGADLENLLNEAALLAARKGKRQINMEEVQEAVAKVLMGPEKRSRVYTEKEKKLTAYHEAGHAIVRTMIPDSEPVHEVSIIPRGYAGGYTMYLPKEDKFYASKSDMMREIVTLLGGRVAEKLVLEDVSTGAASDIKRATKIARDMVTKYGMSDKLGPMTFGTEQEEVFLGRDLALARNYSEEVAAEIDREIKSIIEEAYKKAEEILKQNIDKLHKVANALLEKEKLTGEEFRKLVFEDAQPQLV</sequence>